<feature type="chain" id="PRO_0000130815" description="Small ribosomal subunit protein eS4">
    <location>
        <begin position="1"/>
        <end position="263"/>
    </location>
</feature>
<feature type="domain" description="S4 RNA-binding">
    <location>
        <begin position="42"/>
        <end position="104"/>
    </location>
</feature>
<sequence length="263" mass="29398">MARGPKKHLKRVAAPKHWMLDKLTGVFAPRPSTGPHKLRECLPLIVFLRNRLKYALTGDEVKKICMQRFIKIDGKVRVDVTYPAGFMDVISIEKTGEHFRLVYDTKGRFAVHRITVEEAKYKLCKVRKITVGVKGIPHLVTHDARTIRYPDPVIKVNDTVQIDLGTGKIINFIKFDTGNLCMVIGGANLGRVGVITNRERHPGSFDVVHVKDANGNSFATRLSNIFVIGNGNKPWISLPRGKGIRLTVAAERDKRLATKQSSG</sequence>
<evidence type="ECO:0000305" key="1"/>
<protein>
    <recommendedName>
        <fullName evidence="1">Small ribosomal subunit protein eS4</fullName>
    </recommendedName>
    <alternativeName>
        <fullName>40S ribosomal protein S4, Y isoform 1</fullName>
    </alternativeName>
</protein>
<dbReference type="EMBL" id="AH012490">
    <property type="protein sequence ID" value="AAO37286.1"/>
    <property type="molecule type" value="Genomic_DNA"/>
</dbReference>
<dbReference type="SMR" id="Q861V0"/>
<dbReference type="STRING" id="9597.ENSPPAP00000033824"/>
<dbReference type="eggNOG" id="KOG0378">
    <property type="taxonomic scope" value="Eukaryota"/>
</dbReference>
<dbReference type="Proteomes" id="UP000240080">
    <property type="component" value="Unplaced"/>
</dbReference>
<dbReference type="GO" id="GO:0022627">
    <property type="term" value="C:cytosolic small ribosomal subunit"/>
    <property type="evidence" value="ECO:0007669"/>
    <property type="project" value="TreeGrafter"/>
</dbReference>
<dbReference type="GO" id="GO:0019843">
    <property type="term" value="F:rRNA binding"/>
    <property type="evidence" value="ECO:0007669"/>
    <property type="project" value="UniProtKB-KW"/>
</dbReference>
<dbReference type="GO" id="GO:0003735">
    <property type="term" value="F:structural constituent of ribosome"/>
    <property type="evidence" value="ECO:0007669"/>
    <property type="project" value="InterPro"/>
</dbReference>
<dbReference type="GO" id="GO:0006412">
    <property type="term" value="P:translation"/>
    <property type="evidence" value="ECO:0007669"/>
    <property type="project" value="InterPro"/>
</dbReference>
<dbReference type="CDD" id="cd06087">
    <property type="entry name" value="KOW_RPS4"/>
    <property type="match status" value="1"/>
</dbReference>
<dbReference type="CDD" id="cd00165">
    <property type="entry name" value="S4"/>
    <property type="match status" value="1"/>
</dbReference>
<dbReference type="FunFam" id="2.30.30.30:FF:000005">
    <property type="entry name" value="40S ribosomal protein S4"/>
    <property type="match status" value="1"/>
</dbReference>
<dbReference type="FunFam" id="2.40.50.740:FF:000001">
    <property type="entry name" value="40S ribosomal protein S4"/>
    <property type="match status" value="1"/>
</dbReference>
<dbReference type="FunFam" id="3.10.290.10:FF:000051">
    <property type="entry name" value="40S ribosomal protein S4, X isoform"/>
    <property type="match status" value="1"/>
</dbReference>
<dbReference type="Gene3D" id="2.30.30.30">
    <property type="match status" value="1"/>
</dbReference>
<dbReference type="Gene3D" id="2.40.50.740">
    <property type="match status" value="1"/>
</dbReference>
<dbReference type="Gene3D" id="3.10.290.10">
    <property type="entry name" value="RNA-binding S4 domain"/>
    <property type="match status" value="1"/>
</dbReference>
<dbReference type="HAMAP" id="MF_00485">
    <property type="entry name" value="Ribosomal_eS4"/>
    <property type="match status" value="1"/>
</dbReference>
<dbReference type="InterPro" id="IPR005824">
    <property type="entry name" value="KOW"/>
</dbReference>
<dbReference type="InterPro" id="IPR014722">
    <property type="entry name" value="Rib_uL2_dom2"/>
</dbReference>
<dbReference type="InterPro" id="IPR000876">
    <property type="entry name" value="Ribosomal_eS4"/>
</dbReference>
<dbReference type="InterPro" id="IPR032277">
    <property type="entry name" value="Ribosomal_eS4_C"/>
</dbReference>
<dbReference type="InterPro" id="IPR013845">
    <property type="entry name" value="Ribosomal_eS4_central_region"/>
</dbReference>
<dbReference type="InterPro" id="IPR038237">
    <property type="entry name" value="Ribosomal_eS4_central_sf"/>
</dbReference>
<dbReference type="InterPro" id="IPR041982">
    <property type="entry name" value="Ribosomal_eS4_KOW"/>
</dbReference>
<dbReference type="InterPro" id="IPR013843">
    <property type="entry name" value="Ribosomal_eS4_N"/>
</dbReference>
<dbReference type="InterPro" id="IPR018199">
    <property type="entry name" value="Ribosomal_eS4_N_CS"/>
</dbReference>
<dbReference type="InterPro" id="IPR002942">
    <property type="entry name" value="S4_RNA-bd"/>
</dbReference>
<dbReference type="InterPro" id="IPR036986">
    <property type="entry name" value="S4_RNA-bd_sf"/>
</dbReference>
<dbReference type="PANTHER" id="PTHR11581">
    <property type="entry name" value="30S/40S RIBOSOMAL PROTEIN S4"/>
    <property type="match status" value="1"/>
</dbReference>
<dbReference type="PANTHER" id="PTHR11581:SF8">
    <property type="entry name" value="SMALL RIBOSOMAL SUBUNIT PROTEIN ES4, Y ISOFORM 1"/>
    <property type="match status" value="1"/>
</dbReference>
<dbReference type="Pfam" id="PF16121">
    <property type="entry name" value="40S_S4_C"/>
    <property type="match status" value="1"/>
</dbReference>
<dbReference type="Pfam" id="PF00467">
    <property type="entry name" value="KOW"/>
    <property type="match status" value="1"/>
</dbReference>
<dbReference type="Pfam" id="PF00900">
    <property type="entry name" value="Ribosomal_S4e"/>
    <property type="match status" value="1"/>
</dbReference>
<dbReference type="Pfam" id="PF08071">
    <property type="entry name" value="RS4NT"/>
    <property type="match status" value="1"/>
</dbReference>
<dbReference type="PIRSF" id="PIRSF002116">
    <property type="entry name" value="Ribosomal_S4"/>
    <property type="match status" value="1"/>
</dbReference>
<dbReference type="SMART" id="SM00363">
    <property type="entry name" value="S4"/>
    <property type="match status" value="1"/>
</dbReference>
<dbReference type="PROSITE" id="PS00528">
    <property type="entry name" value="RIBOSOMAL_S4E"/>
    <property type="match status" value="1"/>
</dbReference>
<dbReference type="PROSITE" id="PS50889">
    <property type="entry name" value="S4"/>
    <property type="match status" value="1"/>
</dbReference>
<keyword id="KW-1185">Reference proteome</keyword>
<keyword id="KW-0687">Ribonucleoprotein</keyword>
<keyword id="KW-0689">Ribosomal protein</keyword>
<keyword id="KW-0694">RNA-binding</keyword>
<keyword id="KW-0699">rRNA-binding</keyword>
<proteinExistence type="inferred from homology"/>
<comment type="similarity">
    <text evidence="1">Belongs to the eukaryotic ribosomal protein eS4 family.</text>
</comment>
<name>RS4Y1_PANPA</name>
<reference key="1">
    <citation type="journal article" date="1998" name="Mol. Biol. Evol.">
        <title>Evolution of RPS4Y.</title>
        <authorList>
            <person name="Bergen A.W."/>
            <person name="Pratt M."/>
            <person name="Mehlman P."/>
            <person name="Goldman D."/>
        </authorList>
    </citation>
    <scope>NUCLEOTIDE SEQUENCE [GENOMIC DNA]</scope>
</reference>
<organism>
    <name type="scientific">Pan paniscus</name>
    <name type="common">Pygmy chimpanzee</name>
    <name type="synonym">Bonobo</name>
    <dbReference type="NCBI Taxonomy" id="9597"/>
    <lineage>
        <taxon>Eukaryota</taxon>
        <taxon>Metazoa</taxon>
        <taxon>Chordata</taxon>
        <taxon>Craniata</taxon>
        <taxon>Vertebrata</taxon>
        <taxon>Euteleostomi</taxon>
        <taxon>Mammalia</taxon>
        <taxon>Eutheria</taxon>
        <taxon>Euarchontoglires</taxon>
        <taxon>Primates</taxon>
        <taxon>Haplorrhini</taxon>
        <taxon>Catarrhini</taxon>
        <taxon>Hominidae</taxon>
        <taxon>Pan</taxon>
    </lineage>
</organism>
<gene>
    <name type="primary">RPS4Y1</name>
    <name type="synonym">RPS4Y</name>
</gene>
<accession>Q861V0</accession>